<proteinExistence type="inferred from homology"/>
<organismHost>
    <name type="scientific">Homo sapiens</name>
    <name type="common">Human</name>
    <dbReference type="NCBI Taxonomy" id="9606"/>
</organismHost>
<organism>
    <name type="scientific">Vaccinia virus (strain Copenhagen)</name>
    <name type="common">VACV</name>
    <dbReference type="NCBI Taxonomy" id="10249"/>
    <lineage>
        <taxon>Viruses</taxon>
        <taxon>Varidnaviria</taxon>
        <taxon>Bamfordvirae</taxon>
        <taxon>Nucleocytoviricota</taxon>
        <taxon>Pokkesviricetes</taxon>
        <taxon>Chitovirales</taxon>
        <taxon>Poxviridae</taxon>
        <taxon>Chordopoxvirinae</taxon>
        <taxon>Orthopoxvirus</taxon>
        <taxon>Vaccinia virus</taxon>
    </lineage>
</organism>
<dbReference type="EMBL" id="M35027">
    <property type="protein sequence ID" value="AAA48176.1"/>
    <property type="molecule type" value="Genomic_DNA"/>
</dbReference>
<dbReference type="PIR" id="B42522">
    <property type="entry name" value="B42522"/>
</dbReference>
<dbReference type="SMR" id="P21132"/>
<dbReference type="Proteomes" id="UP000008269">
    <property type="component" value="Segment"/>
</dbReference>
<dbReference type="GO" id="GO:0030430">
    <property type="term" value="C:host cell cytoplasm"/>
    <property type="evidence" value="ECO:0007669"/>
    <property type="project" value="UniProtKB-SubCell"/>
</dbReference>
<dbReference type="GO" id="GO:0044423">
    <property type="term" value="C:virion component"/>
    <property type="evidence" value="ECO:0007669"/>
    <property type="project" value="UniProtKB-KW"/>
</dbReference>
<dbReference type="GO" id="GO:0046872">
    <property type="term" value="F:metal ion binding"/>
    <property type="evidence" value="ECO:0007669"/>
    <property type="project" value="InterPro"/>
</dbReference>
<dbReference type="GO" id="GO:0006801">
    <property type="term" value="P:superoxide metabolic process"/>
    <property type="evidence" value="ECO:0007669"/>
    <property type="project" value="InterPro"/>
</dbReference>
<dbReference type="Gene3D" id="2.60.40.200">
    <property type="entry name" value="Superoxide dismutase, copper/zinc binding domain"/>
    <property type="match status" value="1"/>
</dbReference>
<dbReference type="InterPro" id="IPR036423">
    <property type="entry name" value="SOD-like_Cu/Zn_dom_sf"/>
</dbReference>
<dbReference type="SUPFAM" id="SSF49329">
    <property type="entry name" value="Cu,Zn superoxide dismutase-like"/>
    <property type="match status" value="1"/>
</dbReference>
<gene>
    <name type="primary">OPG175</name>
    <name type="ORF">A45R</name>
</gene>
<comment type="function">
    <text evidence="2">Superoxide dismutase-like protein with no enzymatic activity.</text>
</comment>
<comment type="subcellular location">
    <subcellularLocation>
        <location evidence="2">Virion</location>
    </subcellularLocation>
    <subcellularLocation>
        <location evidence="2">Host cytoplasm</location>
    </subcellularLocation>
    <text evidence="2">Accumulates predominantly in cytoplasmic viral factories.</text>
</comment>
<comment type="similarity">
    <text evidence="3">Belongs to the Cu-Zn superoxide dismutase family.</text>
</comment>
<name>SODL_VACCC</name>
<protein>
    <recommendedName>
        <fullName>Cu-Zn superoxide dismutase-like protein OPG175</fullName>
    </recommendedName>
</protein>
<evidence type="ECO:0000250" key="1"/>
<evidence type="ECO:0000250" key="2">
    <source>
        <dbReference type="UniProtKB" id="P26669"/>
    </source>
</evidence>
<evidence type="ECO:0000305" key="3"/>
<feature type="chain" id="PRO_0000164165" description="Cu-Zn superoxide dismutase-like protein OPG175">
    <location>
        <begin position="1"/>
        <end position="125"/>
    </location>
</feature>
<feature type="disulfide bond" evidence="1">
    <location>
        <begin position="52"/>
        <end position="102"/>
    </location>
</feature>
<accession>P21132</accession>
<reference key="1">
    <citation type="journal article" date="1990" name="Virology">
        <title>The complete DNA sequence of vaccinia virus.</title>
        <authorList>
            <person name="Goebel S.J."/>
            <person name="Johnson G.P."/>
            <person name="Perkus M.E."/>
            <person name="Davis S.W."/>
            <person name="Winslow J.P."/>
            <person name="Paoletti E."/>
        </authorList>
    </citation>
    <scope>NUCLEOTIDE SEQUENCE [LARGE SCALE GENOMIC DNA]</scope>
</reference>
<reference key="2">
    <citation type="journal article" date="1990" name="Virology">
        <title>Appendix to 'The complete DNA sequence of vaccinia virus'.</title>
        <authorList>
            <person name="Goebel S.J."/>
            <person name="Johnson G.P."/>
            <person name="Perkus M.E."/>
            <person name="Davis S.W."/>
            <person name="Winslow J.P."/>
            <person name="Paoletti E."/>
        </authorList>
    </citation>
    <scope>COMPLETE GENOME</scope>
</reference>
<keyword id="KW-1015">Disulfide bond</keyword>
<keyword id="KW-1035">Host cytoplasm</keyword>
<keyword id="KW-1185">Reference proteome</keyword>
<keyword id="KW-0946">Virion</keyword>
<sequence length="125" mass="13795">MAVCIIDHDNIRGVIYFEPVHGKDKVLGSVIGLKSGTYSLIIHRYGDISQGCDSIGSPEIFIGNIFVNRYGVAYVYLDTDVNIFTIIGKALSISKNDQRLACEVIGISYINEKIIHFLTINENGV</sequence>